<keyword id="KW-0150">Chloroplast</keyword>
<keyword id="KW-0472">Membrane</keyword>
<keyword id="KW-0520">NAD</keyword>
<keyword id="KW-0521">NADP</keyword>
<keyword id="KW-0934">Plastid</keyword>
<keyword id="KW-0618">Plastoquinone</keyword>
<keyword id="KW-0874">Quinone</keyword>
<keyword id="KW-0793">Thylakoid</keyword>
<keyword id="KW-1278">Translocase</keyword>
<keyword id="KW-0812">Transmembrane</keyword>
<keyword id="KW-1133">Transmembrane helix</keyword>
<keyword id="KW-0813">Transport</keyword>
<comment type="function">
    <text evidence="1">NDH shuttles electrons from NAD(P)H:plastoquinone, via FMN and iron-sulfur (Fe-S) centers, to quinones in the photosynthetic chain and possibly in a chloroplast respiratory chain. The immediate electron acceptor for the enzyme in this species is believed to be plastoquinone. Couples the redox reaction to proton translocation, and thus conserves the redox energy in a proton gradient.</text>
</comment>
<comment type="catalytic activity">
    <reaction evidence="1">
        <text>a plastoquinone + NADH + (n+1) H(+)(in) = a plastoquinol + NAD(+) + n H(+)(out)</text>
        <dbReference type="Rhea" id="RHEA:42608"/>
        <dbReference type="Rhea" id="RHEA-COMP:9561"/>
        <dbReference type="Rhea" id="RHEA-COMP:9562"/>
        <dbReference type="ChEBI" id="CHEBI:15378"/>
        <dbReference type="ChEBI" id="CHEBI:17757"/>
        <dbReference type="ChEBI" id="CHEBI:57540"/>
        <dbReference type="ChEBI" id="CHEBI:57945"/>
        <dbReference type="ChEBI" id="CHEBI:62192"/>
    </reaction>
</comment>
<comment type="catalytic activity">
    <reaction evidence="1">
        <text>a plastoquinone + NADPH + (n+1) H(+)(in) = a plastoquinol + NADP(+) + n H(+)(out)</text>
        <dbReference type="Rhea" id="RHEA:42612"/>
        <dbReference type="Rhea" id="RHEA-COMP:9561"/>
        <dbReference type="Rhea" id="RHEA-COMP:9562"/>
        <dbReference type="ChEBI" id="CHEBI:15378"/>
        <dbReference type="ChEBI" id="CHEBI:17757"/>
        <dbReference type="ChEBI" id="CHEBI:57783"/>
        <dbReference type="ChEBI" id="CHEBI:58349"/>
        <dbReference type="ChEBI" id="CHEBI:62192"/>
    </reaction>
</comment>
<comment type="subunit">
    <text evidence="1">NDH is composed of at least 16 different subunits, 5 of which are encoded in the nucleus.</text>
</comment>
<comment type="subcellular location">
    <subcellularLocation>
        <location evidence="1">Plastid</location>
        <location evidence="1">Chloroplast thylakoid membrane</location>
        <topology evidence="1">Multi-pass membrane protein</topology>
    </subcellularLocation>
</comment>
<comment type="similarity">
    <text evidence="1">Belongs to the complex I subunit 4L family.</text>
</comment>
<reference key="1">
    <citation type="journal article" date="2008" name="Nucleic Acids Res.">
        <title>The complete nucleotide sequences of the five genetically distinct plastid genomes of Oenothera, subsection Oenothera: I. Sequence evaluation and plastome evolution.</title>
        <authorList>
            <person name="Greiner S."/>
            <person name="Wang X."/>
            <person name="Rauwolf U."/>
            <person name="Silber M.V."/>
            <person name="Mayer K."/>
            <person name="Meurer J."/>
            <person name="Haberer G."/>
            <person name="Herrmann R.G."/>
        </authorList>
    </citation>
    <scope>NUCLEOTIDE SEQUENCE [LARGE SCALE GENOMIC DNA]</scope>
    <source>
        <strain>cv. Rr-lamarckiana Sweden</strain>
    </source>
</reference>
<organism>
    <name type="scientific">Oenothera glazioviana</name>
    <name type="common">Large-flowered evening primrose</name>
    <name type="synonym">Oenothera erythrosepala</name>
    <dbReference type="NCBI Taxonomy" id="482428"/>
    <lineage>
        <taxon>Eukaryota</taxon>
        <taxon>Viridiplantae</taxon>
        <taxon>Streptophyta</taxon>
        <taxon>Embryophyta</taxon>
        <taxon>Tracheophyta</taxon>
        <taxon>Spermatophyta</taxon>
        <taxon>Magnoliopsida</taxon>
        <taxon>eudicotyledons</taxon>
        <taxon>Gunneridae</taxon>
        <taxon>Pentapetalae</taxon>
        <taxon>rosids</taxon>
        <taxon>malvids</taxon>
        <taxon>Myrtales</taxon>
        <taxon>Onagraceae</taxon>
        <taxon>Onagroideae</taxon>
        <taxon>Onagreae</taxon>
        <taxon>Oenothera</taxon>
    </lineage>
</organism>
<gene>
    <name evidence="1" type="primary">ndhE</name>
</gene>
<evidence type="ECO:0000255" key="1">
    <source>
        <dbReference type="HAMAP-Rule" id="MF_01456"/>
    </source>
</evidence>
<name>NU4LC_OENGL</name>
<feature type="chain" id="PRO_0000360354" description="NAD(P)H-quinone oxidoreductase subunit 4L, chloroplastic">
    <location>
        <begin position="1"/>
        <end position="101"/>
    </location>
</feature>
<feature type="transmembrane region" description="Helical" evidence="1">
    <location>
        <begin position="2"/>
        <end position="22"/>
    </location>
</feature>
<feature type="transmembrane region" description="Helical" evidence="1">
    <location>
        <begin position="30"/>
        <end position="52"/>
    </location>
</feature>
<feature type="transmembrane region" description="Helical" evidence="1">
    <location>
        <begin position="61"/>
        <end position="81"/>
    </location>
</feature>
<geneLocation type="chloroplast"/>
<proteinExistence type="inferred from homology"/>
<accession>B0Z595</accession>
<dbReference type="EC" id="7.1.1.-" evidence="1"/>
<dbReference type="EMBL" id="EU262890">
    <property type="protein sequence ID" value="ABX10088.1"/>
    <property type="molecule type" value="Genomic_DNA"/>
</dbReference>
<dbReference type="RefSeq" id="YP_001687334.1">
    <property type="nucleotide sequence ID" value="NC_010360.2"/>
</dbReference>
<dbReference type="SMR" id="B0Z595"/>
<dbReference type="GeneID" id="5955268"/>
<dbReference type="GO" id="GO:0009535">
    <property type="term" value="C:chloroplast thylakoid membrane"/>
    <property type="evidence" value="ECO:0007669"/>
    <property type="project" value="UniProtKB-SubCell"/>
</dbReference>
<dbReference type="GO" id="GO:0030964">
    <property type="term" value="C:NADH dehydrogenase complex"/>
    <property type="evidence" value="ECO:0007669"/>
    <property type="project" value="TreeGrafter"/>
</dbReference>
<dbReference type="GO" id="GO:0016655">
    <property type="term" value="F:oxidoreductase activity, acting on NAD(P)H, quinone or similar compound as acceptor"/>
    <property type="evidence" value="ECO:0007669"/>
    <property type="project" value="UniProtKB-UniRule"/>
</dbReference>
<dbReference type="GO" id="GO:0048038">
    <property type="term" value="F:quinone binding"/>
    <property type="evidence" value="ECO:0007669"/>
    <property type="project" value="UniProtKB-KW"/>
</dbReference>
<dbReference type="GO" id="GO:0042773">
    <property type="term" value="P:ATP synthesis coupled electron transport"/>
    <property type="evidence" value="ECO:0007669"/>
    <property type="project" value="InterPro"/>
</dbReference>
<dbReference type="GO" id="GO:0019684">
    <property type="term" value="P:photosynthesis, light reaction"/>
    <property type="evidence" value="ECO:0007669"/>
    <property type="project" value="UniProtKB-UniRule"/>
</dbReference>
<dbReference type="FunFam" id="1.10.287.3510:FF:000001">
    <property type="entry name" value="NADH-quinone oxidoreductase subunit K"/>
    <property type="match status" value="1"/>
</dbReference>
<dbReference type="Gene3D" id="1.10.287.3510">
    <property type="match status" value="1"/>
</dbReference>
<dbReference type="HAMAP" id="MF_01456">
    <property type="entry name" value="NDH1_NuoK"/>
    <property type="match status" value="1"/>
</dbReference>
<dbReference type="InterPro" id="IPR001133">
    <property type="entry name" value="NADH_UbQ_OxRdtase_chain4L/K"/>
</dbReference>
<dbReference type="InterPro" id="IPR039428">
    <property type="entry name" value="NUOK/Mnh_C1-like"/>
</dbReference>
<dbReference type="NCBIfam" id="NF004320">
    <property type="entry name" value="PRK05715.1-2"/>
    <property type="match status" value="1"/>
</dbReference>
<dbReference type="NCBIfam" id="NF004322">
    <property type="entry name" value="PRK05715.1-4"/>
    <property type="match status" value="1"/>
</dbReference>
<dbReference type="NCBIfam" id="NF004323">
    <property type="entry name" value="PRK05715.1-5"/>
    <property type="match status" value="1"/>
</dbReference>
<dbReference type="PANTHER" id="PTHR11434:SF16">
    <property type="entry name" value="NADH-UBIQUINONE OXIDOREDUCTASE CHAIN 4L"/>
    <property type="match status" value="1"/>
</dbReference>
<dbReference type="PANTHER" id="PTHR11434">
    <property type="entry name" value="NADH-UBIQUINONE OXIDOREDUCTASE SUBUNIT ND4L"/>
    <property type="match status" value="1"/>
</dbReference>
<dbReference type="Pfam" id="PF00420">
    <property type="entry name" value="Oxidored_q2"/>
    <property type="match status" value="1"/>
</dbReference>
<sequence>MILEHVLVLSAYLFSIGIYGLITSRNMVRALMCLELLLNSVNLNFVTFSDFFDSRQLKGDIFSIFIIAIAAAEATIGLAIVSSIYRNRKSIRINQSNLLNK</sequence>
<protein>
    <recommendedName>
        <fullName evidence="1">NAD(P)H-quinone oxidoreductase subunit 4L, chloroplastic</fullName>
        <ecNumber evidence="1">7.1.1.-</ecNumber>
    </recommendedName>
    <alternativeName>
        <fullName evidence="1">NAD(P)H dehydrogenase subunit 4L</fullName>
    </alternativeName>
    <alternativeName>
        <fullName evidence="1">NADH-plastoquinone oxidoreductase subunit 4L</fullName>
    </alternativeName>
</protein>